<protein>
    <recommendedName>
        <fullName evidence="1">4-hydroxy-tetrahydrodipicolinate synthase</fullName>
        <shortName evidence="1">HTPA synthase</shortName>
        <ecNumber evidence="1">4.3.3.7</ecNumber>
    </recommendedName>
</protein>
<dbReference type="EC" id="4.3.3.7" evidence="1"/>
<dbReference type="EMBL" id="CP000769">
    <property type="protein sequence ID" value="ABS24569.1"/>
    <property type="molecule type" value="Genomic_DNA"/>
</dbReference>
<dbReference type="RefSeq" id="WP_011984675.1">
    <property type="nucleotide sequence ID" value="NC_009675.1"/>
</dbReference>
<dbReference type="SMR" id="A7H773"/>
<dbReference type="STRING" id="404589.Anae109_0354"/>
<dbReference type="KEGG" id="afw:Anae109_0354"/>
<dbReference type="eggNOG" id="COG0329">
    <property type="taxonomic scope" value="Bacteria"/>
</dbReference>
<dbReference type="HOGENOM" id="CLU_049343_7_0_7"/>
<dbReference type="OrthoDB" id="9782828at2"/>
<dbReference type="UniPathway" id="UPA00034">
    <property type="reaction ID" value="UER00017"/>
</dbReference>
<dbReference type="Proteomes" id="UP000006382">
    <property type="component" value="Chromosome"/>
</dbReference>
<dbReference type="GO" id="GO:0005829">
    <property type="term" value="C:cytosol"/>
    <property type="evidence" value="ECO:0007669"/>
    <property type="project" value="TreeGrafter"/>
</dbReference>
<dbReference type="GO" id="GO:0008840">
    <property type="term" value="F:4-hydroxy-tetrahydrodipicolinate synthase activity"/>
    <property type="evidence" value="ECO:0007669"/>
    <property type="project" value="UniProtKB-UniRule"/>
</dbReference>
<dbReference type="GO" id="GO:0019877">
    <property type="term" value="P:diaminopimelate biosynthetic process"/>
    <property type="evidence" value="ECO:0007669"/>
    <property type="project" value="UniProtKB-UniRule"/>
</dbReference>
<dbReference type="GO" id="GO:0009089">
    <property type="term" value="P:lysine biosynthetic process via diaminopimelate"/>
    <property type="evidence" value="ECO:0007669"/>
    <property type="project" value="UniProtKB-UniRule"/>
</dbReference>
<dbReference type="CDD" id="cd00950">
    <property type="entry name" value="DHDPS"/>
    <property type="match status" value="1"/>
</dbReference>
<dbReference type="Gene3D" id="3.20.20.70">
    <property type="entry name" value="Aldolase class I"/>
    <property type="match status" value="1"/>
</dbReference>
<dbReference type="HAMAP" id="MF_00418">
    <property type="entry name" value="DapA"/>
    <property type="match status" value="1"/>
</dbReference>
<dbReference type="InterPro" id="IPR013785">
    <property type="entry name" value="Aldolase_TIM"/>
</dbReference>
<dbReference type="InterPro" id="IPR005263">
    <property type="entry name" value="DapA"/>
</dbReference>
<dbReference type="InterPro" id="IPR002220">
    <property type="entry name" value="DapA-like"/>
</dbReference>
<dbReference type="InterPro" id="IPR020625">
    <property type="entry name" value="Schiff_base-form_aldolases_AS"/>
</dbReference>
<dbReference type="InterPro" id="IPR020624">
    <property type="entry name" value="Schiff_base-form_aldolases_CS"/>
</dbReference>
<dbReference type="NCBIfam" id="TIGR00674">
    <property type="entry name" value="dapA"/>
    <property type="match status" value="1"/>
</dbReference>
<dbReference type="PANTHER" id="PTHR12128:SF66">
    <property type="entry name" value="4-HYDROXY-2-OXOGLUTARATE ALDOLASE, MITOCHONDRIAL"/>
    <property type="match status" value="1"/>
</dbReference>
<dbReference type="PANTHER" id="PTHR12128">
    <property type="entry name" value="DIHYDRODIPICOLINATE SYNTHASE"/>
    <property type="match status" value="1"/>
</dbReference>
<dbReference type="Pfam" id="PF00701">
    <property type="entry name" value="DHDPS"/>
    <property type="match status" value="1"/>
</dbReference>
<dbReference type="PIRSF" id="PIRSF001365">
    <property type="entry name" value="DHDPS"/>
    <property type="match status" value="1"/>
</dbReference>
<dbReference type="PRINTS" id="PR00146">
    <property type="entry name" value="DHPICSNTHASE"/>
</dbReference>
<dbReference type="SMART" id="SM01130">
    <property type="entry name" value="DHDPS"/>
    <property type="match status" value="1"/>
</dbReference>
<dbReference type="SUPFAM" id="SSF51569">
    <property type="entry name" value="Aldolase"/>
    <property type="match status" value="1"/>
</dbReference>
<dbReference type="PROSITE" id="PS00665">
    <property type="entry name" value="DHDPS_1"/>
    <property type="match status" value="1"/>
</dbReference>
<dbReference type="PROSITE" id="PS00666">
    <property type="entry name" value="DHDPS_2"/>
    <property type="match status" value="1"/>
</dbReference>
<sequence>MPRLEGSMVAIVTPMKDGAVDLRALRELTEWQIAEGTDGIVPCGTTGEGATLTAAERAEVIRAVVEVARGRALVVAGAGSNATHEAIEGVKAAKALGADAALVVTPYYNKPTPEGLYRHYTAIWEATRFPVVAYNVPGRTAVDMGPDTVARLAKAGAIVGIKEATASMDRQVQLVERIGKDAIAYLSGDDFTVVPYIACGGHGVISVISNIAPRAMKDLVVAARLGDFARALDLQVRMAELNRVMFVETSPGPVKAAVALLGRAGPELRLPLAPVSEASLSKVREAMTRFGLKLA</sequence>
<evidence type="ECO:0000255" key="1">
    <source>
        <dbReference type="HAMAP-Rule" id="MF_00418"/>
    </source>
</evidence>
<evidence type="ECO:0000305" key="2"/>
<name>DAPA_ANADF</name>
<accession>A7H773</accession>
<organism>
    <name type="scientific">Anaeromyxobacter sp. (strain Fw109-5)</name>
    <dbReference type="NCBI Taxonomy" id="404589"/>
    <lineage>
        <taxon>Bacteria</taxon>
        <taxon>Pseudomonadati</taxon>
        <taxon>Myxococcota</taxon>
        <taxon>Myxococcia</taxon>
        <taxon>Myxococcales</taxon>
        <taxon>Cystobacterineae</taxon>
        <taxon>Anaeromyxobacteraceae</taxon>
        <taxon>Anaeromyxobacter</taxon>
    </lineage>
</organism>
<reference key="1">
    <citation type="journal article" date="2015" name="Genome Announc.">
        <title>Complete genome sequence of Anaeromyxobacter sp. Fw109-5, an anaerobic, metal-reducing bacterium isolated from a contaminated subsurface environment.</title>
        <authorList>
            <person name="Hwang C."/>
            <person name="Copeland A."/>
            <person name="Lucas S."/>
            <person name="Lapidus A."/>
            <person name="Barry K."/>
            <person name="Glavina Del Rio T."/>
            <person name="Dalin E."/>
            <person name="Tice H."/>
            <person name="Pitluck S."/>
            <person name="Sims D."/>
            <person name="Brettin T."/>
            <person name="Bruce D.C."/>
            <person name="Detter J.C."/>
            <person name="Han C.S."/>
            <person name="Schmutz J."/>
            <person name="Larimer F.W."/>
            <person name="Land M.L."/>
            <person name="Hauser L.J."/>
            <person name="Kyrpides N."/>
            <person name="Lykidis A."/>
            <person name="Richardson P."/>
            <person name="Belieav A."/>
            <person name="Sanford R.A."/>
            <person name="Loeffler F.E."/>
            <person name="Fields M.W."/>
        </authorList>
    </citation>
    <scope>NUCLEOTIDE SEQUENCE [LARGE SCALE GENOMIC DNA]</scope>
    <source>
        <strain>Fw109-5</strain>
    </source>
</reference>
<proteinExistence type="inferred from homology"/>
<keyword id="KW-0028">Amino-acid biosynthesis</keyword>
<keyword id="KW-0963">Cytoplasm</keyword>
<keyword id="KW-0220">Diaminopimelate biosynthesis</keyword>
<keyword id="KW-0456">Lyase</keyword>
<keyword id="KW-0457">Lysine biosynthesis</keyword>
<keyword id="KW-1185">Reference proteome</keyword>
<keyword id="KW-0704">Schiff base</keyword>
<feature type="chain" id="PRO_1000080522" description="4-hydroxy-tetrahydrodipicolinate synthase">
    <location>
        <begin position="1"/>
        <end position="295"/>
    </location>
</feature>
<feature type="active site" description="Proton donor/acceptor" evidence="1">
    <location>
        <position position="134"/>
    </location>
</feature>
<feature type="active site" description="Schiff-base intermediate with substrate" evidence="1">
    <location>
        <position position="162"/>
    </location>
</feature>
<feature type="binding site" evidence="1">
    <location>
        <position position="46"/>
    </location>
    <ligand>
        <name>pyruvate</name>
        <dbReference type="ChEBI" id="CHEBI:15361"/>
    </ligand>
</feature>
<feature type="binding site" evidence="1">
    <location>
        <position position="205"/>
    </location>
    <ligand>
        <name>pyruvate</name>
        <dbReference type="ChEBI" id="CHEBI:15361"/>
    </ligand>
</feature>
<feature type="site" description="Part of a proton relay during catalysis" evidence="1">
    <location>
        <position position="45"/>
    </location>
</feature>
<feature type="site" description="Part of a proton relay during catalysis" evidence="1">
    <location>
        <position position="108"/>
    </location>
</feature>
<gene>
    <name evidence="1" type="primary">dapA</name>
    <name type="ordered locus">Anae109_0354</name>
</gene>
<comment type="function">
    <text evidence="1">Catalyzes the condensation of (S)-aspartate-beta-semialdehyde [(S)-ASA] and pyruvate to 4-hydroxy-tetrahydrodipicolinate (HTPA).</text>
</comment>
<comment type="catalytic activity">
    <reaction evidence="1">
        <text>L-aspartate 4-semialdehyde + pyruvate = (2S,4S)-4-hydroxy-2,3,4,5-tetrahydrodipicolinate + H2O + H(+)</text>
        <dbReference type="Rhea" id="RHEA:34171"/>
        <dbReference type="ChEBI" id="CHEBI:15361"/>
        <dbReference type="ChEBI" id="CHEBI:15377"/>
        <dbReference type="ChEBI" id="CHEBI:15378"/>
        <dbReference type="ChEBI" id="CHEBI:67139"/>
        <dbReference type="ChEBI" id="CHEBI:537519"/>
        <dbReference type="EC" id="4.3.3.7"/>
    </reaction>
</comment>
<comment type="pathway">
    <text evidence="1">Amino-acid biosynthesis; L-lysine biosynthesis via DAP pathway; (S)-tetrahydrodipicolinate from L-aspartate: step 3/4.</text>
</comment>
<comment type="subunit">
    <text evidence="1">Homotetramer; dimer of dimers.</text>
</comment>
<comment type="subcellular location">
    <subcellularLocation>
        <location evidence="1">Cytoplasm</location>
    </subcellularLocation>
</comment>
<comment type="similarity">
    <text evidence="1">Belongs to the DapA family.</text>
</comment>
<comment type="caution">
    <text evidence="2">Was originally thought to be a dihydrodipicolinate synthase (DHDPS), catalyzing the condensation of (S)-aspartate-beta-semialdehyde [(S)-ASA] and pyruvate to dihydrodipicolinate (DHDP). However, it was shown in E.coli that the product of the enzymatic reaction is not dihydrodipicolinate but in fact (4S)-4-hydroxy-2,3,4,5-tetrahydro-(2S)-dipicolinic acid (HTPA), and that the consecutive dehydration reaction leading to DHDP is not spontaneous but catalyzed by DapB.</text>
</comment>